<protein>
    <recommendedName>
        <fullName>Defensin-like protein AX2</fullName>
    </recommendedName>
    <alternativeName>
        <fullName>Antifungal protein AX2</fullName>
    </alternativeName>
</protein>
<accession>P82010</accession>
<accession>P81510</accession>
<comment type="function">
    <text>Strong inhibiting activity against C.beticola and other filamentous fungi. Little or no effect against bacteria.</text>
</comment>
<comment type="tissue specificity">
    <text>Leaves and flowers.</text>
</comment>
<comment type="mass spectrometry" mass="5193.0" error="3.0" method="Electrospray" evidence="2"/>
<comment type="similarity">
    <text evidence="3">Belongs to the DEFL family.</text>
</comment>
<sequence length="46" mass="5185">ATCRKPSMYFSGACFSDTNCQKACNREDWPNGKCLVGFKCECQRPC</sequence>
<evidence type="ECO:0000250" key="1"/>
<evidence type="ECO:0000269" key="2">
    <source>
    </source>
</evidence>
<evidence type="ECO:0000305" key="3"/>
<proteinExistence type="evidence at protein level"/>
<keyword id="KW-0044">Antibiotic</keyword>
<keyword id="KW-0929">Antimicrobial</keyword>
<keyword id="KW-0903">Direct protein sequencing</keyword>
<keyword id="KW-1015">Disulfide bond</keyword>
<keyword id="KW-0295">Fungicide</keyword>
<keyword id="KW-0611">Plant defense</keyword>
<name>DFAX2_BETVU</name>
<dbReference type="SMR" id="P82010"/>
<dbReference type="GO" id="GO:0042742">
    <property type="term" value="P:defense response to bacterium"/>
    <property type="evidence" value="ECO:0007669"/>
    <property type="project" value="UniProtKB-KW"/>
</dbReference>
<dbReference type="GO" id="GO:0050832">
    <property type="term" value="P:defense response to fungus"/>
    <property type="evidence" value="ECO:0007669"/>
    <property type="project" value="UniProtKB-KW"/>
</dbReference>
<dbReference type="GO" id="GO:0031640">
    <property type="term" value="P:killing of cells of another organism"/>
    <property type="evidence" value="ECO:0007669"/>
    <property type="project" value="UniProtKB-KW"/>
</dbReference>
<dbReference type="Gene3D" id="3.30.30.10">
    <property type="entry name" value="Knottin, scorpion toxin-like"/>
    <property type="match status" value="1"/>
</dbReference>
<dbReference type="InterPro" id="IPR008176">
    <property type="entry name" value="Defensin_plant"/>
</dbReference>
<dbReference type="InterPro" id="IPR003614">
    <property type="entry name" value="Scorpion_toxin-like"/>
</dbReference>
<dbReference type="InterPro" id="IPR036574">
    <property type="entry name" value="Scorpion_toxin-like_sf"/>
</dbReference>
<dbReference type="Pfam" id="PF00304">
    <property type="entry name" value="Gamma-thionin"/>
    <property type="match status" value="1"/>
</dbReference>
<dbReference type="SMART" id="SM00505">
    <property type="entry name" value="Knot1"/>
    <property type="match status" value="1"/>
</dbReference>
<dbReference type="SUPFAM" id="SSF57095">
    <property type="entry name" value="Scorpion toxin-like"/>
    <property type="match status" value="1"/>
</dbReference>
<dbReference type="PROSITE" id="PS00940">
    <property type="entry name" value="GAMMA_THIONIN"/>
    <property type="match status" value="1"/>
</dbReference>
<reference key="1">
    <citation type="journal article" date="1995" name="Mol. Plant Microbe Interact.">
        <title>Characterization and localization of new antifungal cysteine-rich proteins from Beta vulgaris.</title>
        <authorList>
            <person name="Kragh K.M."/>
            <person name="Nielsen J.E."/>
            <person name="Nielsen K.K."/>
            <person name="Dreboldt S."/>
            <person name="Mikkelsen J.D."/>
        </authorList>
    </citation>
    <scope>PROTEIN SEQUENCE</scope>
    <scope>MASS SPECTROMETRY</scope>
    <source>
        <strain>cv. Rhizor</strain>
        <strain>cv. Turbo</strain>
        <tissue>Leaf</tissue>
    </source>
</reference>
<organism>
    <name type="scientific">Beta vulgaris</name>
    <name type="common">Sugar beet</name>
    <dbReference type="NCBI Taxonomy" id="161934"/>
    <lineage>
        <taxon>Eukaryota</taxon>
        <taxon>Viridiplantae</taxon>
        <taxon>Streptophyta</taxon>
        <taxon>Embryophyta</taxon>
        <taxon>Tracheophyta</taxon>
        <taxon>Spermatophyta</taxon>
        <taxon>Magnoliopsida</taxon>
        <taxon>eudicotyledons</taxon>
        <taxon>Gunneridae</taxon>
        <taxon>Pentapetalae</taxon>
        <taxon>Caryophyllales</taxon>
        <taxon>Chenopodiaceae</taxon>
        <taxon>Betoideae</taxon>
        <taxon>Beta</taxon>
    </lineage>
</organism>
<feature type="chain" id="PRO_0000074234" description="Defensin-like protein AX2">
    <location>
        <begin position="1"/>
        <end position="46"/>
    </location>
</feature>
<feature type="disulfide bond" evidence="1">
    <location>
        <begin position="3"/>
        <end position="46"/>
    </location>
</feature>
<feature type="disulfide bond" evidence="1">
    <location>
        <begin position="14"/>
        <end position="34"/>
    </location>
</feature>
<feature type="disulfide bond" evidence="1">
    <location>
        <begin position="20"/>
        <end position="40"/>
    </location>
</feature>
<feature type="disulfide bond" evidence="1">
    <location>
        <begin position="24"/>
        <end position="42"/>
    </location>
</feature>